<proteinExistence type="inferred from homology"/>
<accession>A9KZX3</accession>
<sequence length="151" mass="16444">MATLEFRLAEMLKVPVEALGFQLWGIEYVQAGKHSTLRVFIDGENGINIEDCANASRQVSAVLDVEDPISTEYTLEVSSPGVDRPLFTAEQYAGYVGEDVKLQLTMPVDGSRNLKGAITAVDGQMLSLKVNGKELVVALDNIRKGNLIAKF</sequence>
<gene>
    <name evidence="1" type="primary">rimP</name>
    <name type="ordered locus">Sbal195_3419</name>
</gene>
<feature type="chain" id="PRO_1000084533" description="Ribosome maturation factor RimP">
    <location>
        <begin position="1"/>
        <end position="151"/>
    </location>
</feature>
<protein>
    <recommendedName>
        <fullName evidence="1">Ribosome maturation factor RimP</fullName>
    </recommendedName>
</protein>
<name>RIMP_SHEB9</name>
<evidence type="ECO:0000255" key="1">
    <source>
        <dbReference type="HAMAP-Rule" id="MF_01077"/>
    </source>
</evidence>
<dbReference type="EMBL" id="CP000891">
    <property type="protein sequence ID" value="ABX50581.1"/>
    <property type="molecule type" value="Genomic_DNA"/>
</dbReference>
<dbReference type="RefSeq" id="WP_006082718.1">
    <property type="nucleotide sequence ID" value="NC_009997.1"/>
</dbReference>
<dbReference type="SMR" id="A9KZX3"/>
<dbReference type="GeneID" id="11773460"/>
<dbReference type="KEGG" id="sbn:Sbal195_3419"/>
<dbReference type="HOGENOM" id="CLU_070525_1_1_6"/>
<dbReference type="Proteomes" id="UP000000770">
    <property type="component" value="Chromosome"/>
</dbReference>
<dbReference type="GO" id="GO:0005829">
    <property type="term" value="C:cytosol"/>
    <property type="evidence" value="ECO:0007669"/>
    <property type="project" value="TreeGrafter"/>
</dbReference>
<dbReference type="GO" id="GO:0000028">
    <property type="term" value="P:ribosomal small subunit assembly"/>
    <property type="evidence" value="ECO:0007669"/>
    <property type="project" value="TreeGrafter"/>
</dbReference>
<dbReference type="GO" id="GO:0006412">
    <property type="term" value="P:translation"/>
    <property type="evidence" value="ECO:0007669"/>
    <property type="project" value="TreeGrafter"/>
</dbReference>
<dbReference type="CDD" id="cd01734">
    <property type="entry name" value="YlxS_C"/>
    <property type="match status" value="1"/>
</dbReference>
<dbReference type="FunFam" id="2.30.30.180:FF:000001">
    <property type="entry name" value="Ribosome maturation factor RimP"/>
    <property type="match status" value="1"/>
</dbReference>
<dbReference type="FunFam" id="3.30.300.70:FF:000001">
    <property type="entry name" value="Ribosome maturation factor RimP"/>
    <property type="match status" value="1"/>
</dbReference>
<dbReference type="Gene3D" id="2.30.30.180">
    <property type="entry name" value="Ribosome maturation factor RimP, C-terminal domain"/>
    <property type="match status" value="1"/>
</dbReference>
<dbReference type="Gene3D" id="3.30.300.70">
    <property type="entry name" value="RimP-like superfamily, N-terminal"/>
    <property type="match status" value="1"/>
</dbReference>
<dbReference type="HAMAP" id="MF_01077">
    <property type="entry name" value="RimP"/>
    <property type="match status" value="1"/>
</dbReference>
<dbReference type="InterPro" id="IPR003728">
    <property type="entry name" value="Ribosome_maturation_RimP"/>
</dbReference>
<dbReference type="InterPro" id="IPR028998">
    <property type="entry name" value="RimP_C"/>
</dbReference>
<dbReference type="InterPro" id="IPR036847">
    <property type="entry name" value="RimP_C_sf"/>
</dbReference>
<dbReference type="InterPro" id="IPR028989">
    <property type="entry name" value="RimP_N"/>
</dbReference>
<dbReference type="InterPro" id="IPR035956">
    <property type="entry name" value="RimP_N_sf"/>
</dbReference>
<dbReference type="NCBIfam" id="NF000927">
    <property type="entry name" value="PRK00092.1-1"/>
    <property type="match status" value="1"/>
</dbReference>
<dbReference type="PANTHER" id="PTHR33867">
    <property type="entry name" value="RIBOSOME MATURATION FACTOR RIMP"/>
    <property type="match status" value="1"/>
</dbReference>
<dbReference type="PANTHER" id="PTHR33867:SF1">
    <property type="entry name" value="RIBOSOME MATURATION FACTOR RIMP"/>
    <property type="match status" value="1"/>
</dbReference>
<dbReference type="Pfam" id="PF17384">
    <property type="entry name" value="DUF150_C"/>
    <property type="match status" value="1"/>
</dbReference>
<dbReference type="Pfam" id="PF02576">
    <property type="entry name" value="RimP_N"/>
    <property type="match status" value="1"/>
</dbReference>
<dbReference type="SUPFAM" id="SSF74942">
    <property type="entry name" value="YhbC-like, C-terminal domain"/>
    <property type="match status" value="1"/>
</dbReference>
<dbReference type="SUPFAM" id="SSF75420">
    <property type="entry name" value="YhbC-like, N-terminal domain"/>
    <property type="match status" value="1"/>
</dbReference>
<reference key="1">
    <citation type="submission" date="2007-11" db="EMBL/GenBank/DDBJ databases">
        <title>Complete sequence of chromosome of Shewanella baltica OS195.</title>
        <authorList>
            <consortium name="US DOE Joint Genome Institute"/>
            <person name="Copeland A."/>
            <person name="Lucas S."/>
            <person name="Lapidus A."/>
            <person name="Barry K."/>
            <person name="Glavina del Rio T."/>
            <person name="Dalin E."/>
            <person name="Tice H."/>
            <person name="Pitluck S."/>
            <person name="Chain P."/>
            <person name="Malfatti S."/>
            <person name="Shin M."/>
            <person name="Vergez L."/>
            <person name="Schmutz J."/>
            <person name="Larimer F."/>
            <person name="Land M."/>
            <person name="Hauser L."/>
            <person name="Kyrpides N."/>
            <person name="Kim E."/>
            <person name="Brettar I."/>
            <person name="Rodrigues J."/>
            <person name="Konstantinidis K."/>
            <person name="Klappenbach J."/>
            <person name="Hofle M."/>
            <person name="Tiedje J."/>
            <person name="Richardson P."/>
        </authorList>
    </citation>
    <scope>NUCLEOTIDE SEQUENCE [LARGE SCALE GENOMIC DNA]</scope>
    <source>
        <strain>OS195</strain>
    </source>
</reference>
<keyword id="KW-0963">Cytoplasm</keyword>
<keyword id="KW-0690">Ribosome biogenesis</keyword>
<organism>
    <name type="scientific">Shewanella baltica (strain OS195)</name>
    <dbReference type="NCBI Taxonomy" id="399599"/>
    <lineage>
        <taxon>Bacteria</taxon>
        <taxon>Pseudomonadati</taxon>
        <taxon>Pseudomonadota</taxon>
        <taxon>Gammaproteobacteria</taxon>
        <taxon>Alteromonadales</taxon>
        <taxon>Shewanellaceae</taxon>
        <taxon>Shewanella</taxon>
    </lineage>
</organism>
<comment type="function">
    <text evidence="1">Required for maturation of 30S ribosomal subunits.</text>
</comment>
<comment type="subcellular location">
    <subcellularLocation>
        <location evidence="1">Cytoplasm</location>
    </subcellularLocation>
</comment>
<comment type="similarity">
    <text evidence="1">Belongs to the RimP family.</text>
</comment>